<feature type="chain" id="PRO_0000151287" description="Ketol-acid reductoisomerase (NADP(+))">
    <location>
        <begin position="1"/>
        <end position="491"/>
    </location>
</feature>
<feature type="domain" description="KARI N-terminal Rossmann" evidence="2">
    <location>
        <begin position="16"/>
        <end position="207"/>
    </location>
</feature>
<feature type="domain" description="KARI C-terminal knotted 1" evidence="3">
    <location>
        <begin position="208"/>
        <end position="344"/>
    </location>
</feature>
<feature type="domain" description="KARI C-terminal knotted 2" evidence="3">
    <location>
        <begin position="345"/>
        <end position="484"/>
    </location>
</feature>
<feature type="active site" evidence="1">
    <location>
        <position position="131"/>
    </location>
</feature>
<feature type="binding site" evidence="1">
    <location>
        <begin position="44"/>
        <end position="47"/>
    </location>
    <ligand>
        <name>NADP(+)</name>
        <dbReference type="ChEBI" id="CHEBI:58349"/>
    </ligand>
</feature>
<feature type="binding site" evidence="1">
    <location>
        <position position="67"/>
    </location>
    <ligand>
        <name>NADP(+)</name>
        <dbReference type="ChEBI" id="CHEBI:58349"/>
    </ligand>
</feature>
<feature type="binding site" evidence="1">
    <location>
        <position position="77"/>
    </location>
    <ligand>
        <name>NADP(+)</name>
        <dbReference type="ChEBI" id="CHEBI:58349"/>
    </ligand>
</feature>
<feature type="binding site" evidence="1">
    <location>
        <begin position="107"/>
        <end position="109"/>
    </location>
    <ligand>
        <name>NADP(+)</name>
        <dbReference type="ChEBI" id="CHEBI:58349"/>
    </ligand>
</feature>
<feature type="binding site" evidence="1">
    <location>
        <position position="157"/>
    </location>
    <ligand>
        <name>NADP(+)</name>
        <dbReference type="ChEBI" id="CHEBI:58349"/>
    </ligand>
</feature>
<feature type="binding site" evidence="1">
    <location>
        <position position="216"/>
    </location>
    <ligand>
        <name>Mg(2+)</name>
        <dbReference type="ChEBI" id="CHEBI:18420"/>
        <label>1</label>
    </ligand>
</feature>
<feature type="binding site" evidence="1">
    <location>
        <position position="216"/>
    </location>
    <ligand>
        <name>Mg(2+)</name>
        <dbReference type="ChEBI" id="CHEBI:18420"/>
        <label>2</label>
    </ligand>
</feature>
<feature type="binding site" evidence="1">
    <location>
        <position position="220"/>
    </location>
    <ligand>
        <name>Mg(2+)</name>
        <dbReference type="ChEBI" id="CHEBI:18420"/>
        <label>1</label>
    </ligand>
</feature>
<feature type="binding site" evidence="1">
    <location>
        <position position="389"/>
    </location>
    <ligand>
        <name>Mg(2+)</name>
        <dbReference type="ChEBI" id="CHEBI:18420"/>
        <label>2</label>
    </ligand>
</feature>
<feature type="binding site" evidence="1">
    <location>
        <position position="393"/>
    </location>
    <ligand>
        <name>Mg(2+)</name>
        <dbReference type="ChEBI" id="CHEBI:18420"/>
        <label>2</label>
    </ligand>
</feature>
<feature type="binding site" evidence="1">
    <location>
        <position position="414"/>
    </location>
    <ligand>
        <name>substrate</name>
    </ligand>
</feature>
<feature type="sequence conflict" description="In Ref. 1; AAC38126." evidence="4" ref="1">
    <original>N</original>
    <variation>I</variation>
    <location>
        <position position="36"/>
    </location>
</feature>
<comment type="function">
    <text evidence="1">Involved in the biosynthesis of branched-chain amino acids (BCAA). Catalyzes an alkyl-migration followed by a ketol-acid reduction of (S)-2-acetolactate (S2AL) to yield (R)-2,3-dihydroxy-isovalerate. In the isomerase reaction, S2AL is rearranged via a Mg-dependent methyl migration to produce 3-hydroxy-3-methyl-2-ketobutyrate (HMKB). In the reductase reaction, this 2-ketoacid undergoes a metal-dependent reduction by NADPH to yield (R)-2,3-dihydroxy-isovalerate.</text>
</comment>
<comment type="catalytic activity">
    <reaction evidence="1">
        <text>(2R)-2,3-dihydroxy-3-methylbutanoate + NADP(+) = (2S)-2-acetolactate + NADPH + H(+)</text>
        <dbReference type="Rhea" id="RHEA:22068"/>
        <dbReference type="ChEBI" id="CHEBI:15378"/>
        <dbReference type="ChEBI" id="CHEBI:49072"/>
        <dbReference type="ChEBI" id="CHEBI:57783"/>
        <dbReference type="ChEBI" id="CHEBI:58349"/>
        <dbReference type="ChEBI" id="CHEBI:58476"/>
        <dbReference type="EC" id="1.1.1.86"/>
    </reaction>
</comment>
<comment type="catalytic activity">
    <reaction evidence="1">
        <text>(2R,3R)-2,3-dihydroxy-3-methylpentanoate + NADP(+) = (S)-2-ethyl-2-hydroxy-3-oxobutanoate + NADPH + H(+)</text>
        <dbReference type="Rhea" id="RHEA:13493"/>
        <dbReference type="ChEBI" id="CHEBI:15378"/>
        <dbReference type="ChEBI" id="CHEBI:49256"/>
        <dbReference type="ChEBI" id="CHEBI:49258"/>
        <dbReference type="ChEBI" id="CHEBI:57783"/>
        <dbReference type="ChEBI" id="CHEBI:58349"/>
        <dbReference type="EC" id="1.1.1.86"/>
    </reaction>
</comment>
<comment type="cofactor">
    <cofactor evidence="1">
        <name>Mg(2+)</name>
        <dbReference type="ChEBI" id="CHEBI:18420"/>
    </cofactor>
    <text evidence="1">Binds 2 magnesium ions per subunit.</text>
</comment>
<comment type="pathway">
    <text evidence="1">Amino-acid biosynthesis; L-isoleucine biosynthesis; L-isoleucine from 2-oxobutanoate: step 2/4.</text>
</comment>
<comment type="pathway">
    <text evidence="1">Amino-acid biosynthesis; L-valine biosynthesis; L-valine from pyruvate: step 2/4.</text>
</comment>
<comment type="similarity">
    <text evidence="1">Belongs to the ketol-acid reductoisomerase family.</text>
</comment>
<name>ILVC_BUCAP</name>
<reference key="1">
    <citation type="journal article" date="1998" name="Curr. Microbiol.">
        <title>Sequence analysis of a 34.7-kb DNA segment from the genome of Buchnera aphidicola (endosymbiont of aphids) containing groEL, dnaA, the atp operon, gidA, and rho.</title>
        <authorList>
            <person name="Clark M.A."/>
            <person name="Baumann L."/>
            <person name="Baumann P."/>
        </authorList>
    </citation>
    <scope>NUCLEOTIDE SEQUENCE [GENOMIC DNA]</scope>
</reference>
<reference key="2">
    <citation type="journal article" date="2002" name="Science">
        <title>50 million years of genomic stasis in endosymbiotic bacteria.</title>
        <authorList>
            <person name="Tamas I."/>
            <person name="Klasson L."/>
            <person name="Canbaeck B."/>
            <person name="Naeslund A.K."/>
            <person name="Eriksson A.-S."/>
            <person name="Wernegreen J.J."/>
            <person name="Sandstroem J.P."/>
            <person name="Moran N.A."/>
            <person name="Andersson S.G.E."/>
        </authorList>
    </citation>
    <scope>NUCLEOTIDE SEQUENCE [LARGE SCALE GENOMIC DNA]</scope>
    <source>
        <strain>Sg</strain>
    </source>
</reference>
<evidence type="ECO:0000255" key="1">
    <source>
        <dbReference type="HAMAP-Rule" id="MF_00435"/>
    </source>
</evidence>
<evidence type="ECO:0000255" key="2">
    <source>
        <dbReference type="PROSITE-ProRule" id="PRU01197"/>
    </source>
</evidence>
<evidence type="ECO:0000255" key="3">
    <source>
        <dbReference type="PROSITE-ProRule" id="PRU01198"/>
    </source>
</evidence>
<evidence type="ECO:0000305" key="4"/>
<accession>O51888</accession>
<gene>
    <name evidence="1" type="primary">ilvC</name>
    <name type="ordered locus">BUsg_575</name>
</gene>
<dbReference type="EC" id="1.1.1.86" evidence="1"/>
<dbReference type="EMBL" id="AF008210">
    <property type="protein sequence ID" value="AAC38126.1"/>
    <property type="molecule type" value="Genomic_DNA"/>
</dbReference>
<dbReference type="EMBL" id="AE013218">
    <property type="protein sequence ID" value="AAM68109.1"/>
    <property type="molecule type" value="Genomic_DNA"/>
</dbReference>
<dbReference type="RefSeq" id="WP_011054075.1">
    <property type="nucleotide sequence ID" value="NC_004061.1"/>
</dbReference>
<dbReference type="SMR" id="O51888"/>
<dbReference type="STRING" id="198804.BUsg_575"/>
<dbReference type="GeneID" id="93004056"/>
<dbReference type="KEGG" id="bas:BUsg_575"/>
<dbReference type="eggNOG" id="COG0059">
    <property type="taxonomic scope" value="Bacteria"/>
</dbReference>
<dbReference type="HOGENOM" id="CLU_551905_0_0_6"/>
<dbReference type="UniPathway" id="UPA00047">
    <property type="reaction ID" value="UER00056"/>
</dbReference>
<dbReference type="UniPathway" id="UPA00049">
    <property type="reaction ID" value="UER00060"/>
</dbReference>
<dbReference type="Proteomes" id="UP000000416">
    <property type="component" value="Chromosome"/>
</dbReference>
<dbReference type="GO" id="GO:0005829">
    <property type="term" value="C:cytosol"/>
    <property type="evidence" value="ECO:0007669"/>
    <property type="project" value="TreeGrafter"/>
</dbReference>
<dbReference type="GO" id="GO:0004455">
    <property type="term" value="F:ketol-acid reductoisomerase activity"/>
    <property type="evidence" value="ECO:0007669"/>
    <property type="project" value="UniProtKB-UniRule"/>
</dbReference>
<dbReference type="GO" id="GO:0000287">
    <property type="term" value="F:magnesium ion binding"/>
    <property type="evidence" value="ECO:0007669"/>
    <property type="project" value="UniProtKB-UniRule"/>
</dbReference>
<dbReference type="GO" id="GO:0009097">
    <property type="term" value="P:isoleucine biosynthetic process"/>
    <property type="evidence" value="ECO:0007669"/>
    <property type="project" value="UniProtKB-UniRule"/>
</dbReference>
<dbReference type="GO" id="GO:0009099">
    <property type="term" value="P:L-valine biosynthetic process"/>
    <property type="evidence" value="ECO:0007669"/>
    <property type="project" value="UniProtKB-UniRule"/>
</dbReference>
<dbReference type="Gene3D" id="1.10.1040.10">
    <property type="entry name" value="N-(1-d-carboxylethyl)-l-norvaline Dehydrogenase, domain 2"/>
    <property type="match status" value="1"/>
</dbReference>
<dbReference type="Gene3D" id="3.40.50.720">
    <property type="entry name" value="NAD(P)-binding Rossmann-like Domain"/>
    <property type="match status" value="1"/>
</dbReference>
<dbReference type="HAMAP" id="MF_00435">
    <property type="entry name" value="IlvC"/>
    <property type="match status" value="1"/>
</dbReference>
<dbReference type="InterPro" id="IPR008927">
    <property type="entry name" value="6-PGluconate_DH-like_C_sf"/>
</dbReference>
<dbReference type="InterPro" id="IPR013328">
    <property type="entry name" value="6PGD_dom2"/>
</dbReference>
<dbReference type="InterPro" id="IPR013023">
    <property type="entry name" value="KARI"/>
</dbReference>
<dbReference type="InterPro" id="IPR000506">
    <property type="entry name" value="KARI_C"/>
</dbReference>
<dbReference type="InterPro" id="IPR013116">
    <property type="entry name" value="KARI_N"/>
</dbReference>
<dbReference type="InterPro" id="IPR036291">
    <property type="entry name" value="NAD(P)-bd_dom_sf"/>
</dbReference>
<dbReference type="NCBIfam" id="TIGR00465">
    <property type="entry name" value="ilvC"/>
    <property type="match status" value="1"/>
</dbReference>
<dbReference type="NCBIfam" id="NF003557">
    <property type="entry name" value="PRK05225.1"/>
    <property type="match status" value="1"/>
</dbReference>
<dbReference type="PANTHER" id="PTHR21371">
    <property type="entry name" value="KETOL-ACID REDUCTOISOMERASE, MITOCHONDRIAL"/>
    <property type="match status" value="1"/>
</dbReference>
<dbReference type="PANTHER" id="PTHR21371:SF1">
    <property type="entry name" value="KETOL-ACID REDUCTOISOMERASE, MITOCHONDRIAL"/>
    <property type="match status" value="1"/>
</dbReference>
<dbReference type="Pfam" id="PF01450">
    <property type="entry name" value="KARI_C"/>
    <property type="match status" value="2"/>
</dbReference>
<dbReference type="Pfam" id="PF07991">
    <property type="entry name" value="KARI_N"/>
    <property type="match status" value="1"/>
</dbReference>
<dbReference type="SUPFAM" id="SSF48179">
    <property type="entry name" value="6-phosphogluconate dehydrogenase C-terminal domain-like"/>
    <property type="match status" value="2"/>
</dbReference>
<dbReference type="SUPFAM" id="SSF51735">
    <property type="entry name" value="NAD(P)-binding Rossmann-fold domains"/>
    <property type="match status" value="1"/>
</dbReference>
<dbReference type="PROSITE" id="PS51851">
    <property type="entry name" value="KARI_C"/>
    <property type="match status" value="2"/>
</dbReference>
<dbReference type="PROSITE" id="PS51850">
    <property type="entry name" value="KARI_N"/>
    <property type="match status" value="1"/>
</dbReference>
<proteinExistence type="inferred from homology"/>
<protein>
    <recommendedName>
        <fullName evidence="1">Ketol-acid reductoisomerase (NADP(+))</fullName>
        <shortName evidence="1">KARI</shortName>
        <ecNumber evidence="1">1.1.1.86</ecNumber>
    </recommendedName>
    <alternativeName>
        <fullName evidence="1">Acetohydroxy-acid isomeroreductase</fullName>
        <shortName evidence="1">AHIR</shortName>
    </alternativeName>
    <alternativeName>
        <fullName evidence="1">Alpha-keto-beta-hydroxylacyl reductoisomerase</fullName>
    </alternativeName>
    <alternativeName>
        <fullName evidence="1">Ketol-acid reductoisomerase type 2</fullName>
    </alternativeName>
    <alternativeName>
        <fullName evidence="1">Ketol-acid reductoisomerase type II</fullName>
    </alternativeName>
</protein>
<keyword id="KW-0028">Amino-acid biosynthesis</keyword>
<keyword id="KW-0100">Branched-chain amino acid biosynthesis</keyword>
<keyword id="KW-0460">Magnesium</keyword>
<keyword id="KW-0479">Metal-binding</keyword>
<keyword id="KW-0521">NADP</keyword>
<keyword id="KW-0560">Oxidoreductase</keyword>
<keyword id="KW-0677">Repeat</keyword>
<sequence length="491" mass="56096">MNYFNKLCFRKRINEIKKCRFMKENEFKNENKILKNKKIVIVGCGSQGLNQALNMRDSGLNISFALKKNSILRKNSSWLNATKNNFEVNDYESLIPNADLVINLTPDKQHENVVKELQKLMKKNSCLGYSHGFNIVECGEIIRKDITVVMVAPKCPGTEVREEFKRGFGVPTLIAVHTENDPKKIGLEIAKAWAFSTGGHRAGVLESSFIAEVKSDLMGEQTILCGLLQTASLICYEKLIKDKHNPSYAAKLIQYGWETITESLKHGGITLMMDRLSNPSKIKAFKISKKIKKILSPLFKKHMDDIISGSFSKEMMIDWHNNDKKLLNWREDTKKTPFEKNILSYSEKISEQEYYDHGTLMVSILKSGIELAFETMINTGIINESAYYESLHELPLIANTIARKKLYEMNIVISDTAEYGSYLFSEAAYPILKDFIMSLEKNVLGLSLPNTKIDNIELYKINEEIRNHPIEIVGKKLRKHMKEMKSICVAK</sequence>
<organism>
    <name type="scientific">Buchnera aphidicola subsp. Schizaphis graminum (strain Sg)</name>
    <dbReference type="NCBI Taxonomy" id="198804"/>
    <lineage>
        <taxon>Bacteria</taxon>
        <taxon>Pseudomonadati</taxon>
        <taxon>Pseudomonadota</taxon>
        <taxon>Gammaproteobacteria</taxon>
        <taxon>Enterobacterales</taxon>
        <taxon>Erwiniaceae</taxon>
        <taxon>Buchnera</taxon>
    </lineage>
</organism>